<evidence type="ECO:0000255" key="1">
    <source>
        <dbReference type="HAMAP-Rule" id="MF_01374"/>
    </source>
</evidence>
<name>GLO2_BRUC2</name>
<accession>A9M8S2</accession>
<reference key="1">
    <citation type="submission" date="2007-10" db="EMBL/GenBank/DDBJ databases">
        <title>Brucella canis ATCC 23365 whole genome shotgun sequencing project.</title>
        <authorList>
            <person name="Setubal J.C."/>
            <person name="Bowns C."/>
            <person name="Boyle S."/>
            <person name="Crasta O.R."/>
            <person name="Czar M.J."/>
            <person name="Dharmanolla C."/>
            <person name="Gillespie J.J."/>
            <person name="Kenyon R.W."/>
            <person name="Lu J."/>
            <person name="Mane S."/>
            <person name="Mohapatra S."/>
            <person name="Nagrani S."/>
            <person name="Purkayastha A."/>
            <person name="Rajasimha H.K."/>
            <person name="Shallom J.M."/>
            <person name="Shallom S."/>
            <person name="Shukla M."/>
            <person name="Snyder E.E."/>
            <person name="Sobral B.W."/>
            <person name="Wattam A.R."/>
            <person name="Will R."/>
            <person name="Williams K."/>
            <person name="Yoo H."/>
            <person name="Bruce D."/>
            <person name="Detter C."/>
            <person name="Munk C."/>
            <person name="Brettin T.S."/>
        </authorList>
    </citation>
    <scope>NUCLEOTIDE SEQUENCE [LARGE SCALE GENOMIC DNA]</scope>
    <source>
        <strain>ATCC 23365 / NCTC 10854 / RM-666</strain>
    </source>
</reference>
<keyword id="KW-0378">Hydrolase</keyword>
<keyword id="KW-0479">Metal-binding</keyword>
<keyword id="KW-1185">Reference proteome</keyword>
<keyword id="KW-0862">Zinc</keyword>
<organism>
    <name type="scientific">Brucella canis (strain ATCC 23365 / NCTC 10854 / RM-666)</name>
    <dbReference type="NCBI Taxonomy" id="483179"/>
    <lineage>
        <taxon>Bacteria</taxon>
        <taxon>Pseudomonadati</taxon>
        <taxon>Pseudomonadota</taxon>
        <taxon>Alphaproteobacteria</taxon>
        <taxon>Hyphomicrobiales</taxon>
        <taxon>Brucellaceae</taxon>
        <taxon>Brucella/Ochrobactrum group</taxon>
        <taxon>Brucella</taxon>
    </lineage>
</organism>
<sequence length="260" mass="29140">MHRMEQRLEIEQFICRSDNYGVLIHDPESALTATIDAPDAYAIEAALERRGWTLDFIFTTHHHLDHVEGNEPLKEKFGVSIIGPEAEKAKIPGIDRTVKGGDEFTFGLFKVKVISTPGHTAGGISYYLPDAKVVFTGDTLFALGCGRLFEGTPATMFHSLEKLVALPGDTALYCGHEYTQNNARFALTIDPDNSALKERAKEIARLRAHERMTLPSTIALEMATNPFLRWHDRTIRARLGLQDAPDEAVFAEIRKRKDMF</sequence>
<proteinExistence type="inferred from homology"/>
<comment type="function">
    <text evidence="1">Thiolesterase that catalyzes the hydrolysis of S-D-lactoyl-glutathione to form glutathione and D-lactic acid.</text>
</comment>
<comment type="catalytic activity">
    <reaction evidence="1">
        <text>an S-(2-hydroxyacyl)glutathione + H2O = a 2-hydroxy carboxylate + glutathione + H(+)</text>
        <dbReference type="Rhea" id="RHEA:21864"/>
        <dbReference type="ChEBI" id="CHEBI:15377"/>
        <dbReference type="ChEBI" id="CHEBI:15378"/>
        <dbReference type="ChEBI" id="CHEBI:57925"/>
        <dbReference type="ChEBI" id="CHEBI:58896"/>
        <dbReference type="ChEBI" id="CHEBI:71261"/>
        <dbReference type="EC" id="3.1.2.6"/>
    </reaction>
</comment>
<comment type="cofactor">
    <cofactor evidence="1">
        <name>Zn(2+)</name>
        <dbReference type="ChEBI" id="CHEBI:29105"/>
    </cofactor>
    <text evidence="1">Binds 2 Zn(2+) ions per subunit.</text>
</comment>
<comment type="pathway">
    <text evidence="1">Secondary metabolite metabolism; methylglyoxal degradation; (R)-lactate from methylglyoxal: step 2/2.</text>
</comment>
<comment type="subunit">
    <text evidence="1">Monomer.</text>
</comment>
<comment type="similarity">
    <text evidence="1">Belongs to the metallo-beta-lactamase superfamily. Glyoxalase II family.</text>
</comment>
<protein>
    <recommendedName>
        <fullName evidence="1">Hydroxyacylglutathione hydrolase</fullName>
        <ecNumber evidence="1">3.1.2.6</ecNumber>
    </recommendedName>
    <alternativeName>
        <fullName evidence="1">Glyoxalase II</fullName>
        <shortName evidence="1">Glx II</shortName>
    </alternativeName>
</protein>
<feature type="chain" id="PRO_1000087277" description="Hydroxyacylglutathione hydrolase">
    <location>
        <begin position="1"/>
        <end position="260"/>
    </location>
</feature>
<feature type="binding site" evidence="1">
    <location>
        <position position="61"/>
    </location>
    <ligand>
        <name>Zn(2+)</name>
        <dbReference type="ChEBI" id="CHEBI:29105"/>
        <label>1</label>
    </ligand>
</feature>
<feature type="binding site" evidence="1">
    <location>
        <position position="63"/>
    </location>
    <ligand>
        <name>Zn(2+)</name>
        <dbReference type="ChEBI" id="CHEBI:29105"/>
        <label>1</label>
    </ligand>
</feature>
<feature type="binding site" evidence="1">
    <location>
        <position position="65"/>
    </location>
    <ligand>
        <name>Zn(2+)</name>
        <dbReference type="ChEBI" id="CHEBI:29105"/>
        <label>2</label>
    </ligand>
</feature>
<feature type="binding site" evidence="1">
    <location>
        <position position="66"/>
    </location>
    <ligand>
        <name>Zn(2+)</name>
        <dbReference type="ChEBI" id="CHEBI:29105"/>
        <label>2</label>
    </ligand>
</feature>
<feature type="binding site" evidence="1">
    <location>
        <position position="119"/>
    </location>
    <ligand>
        <name>Zn(2+)</name>
        <dbReference type="ChEBI" id="CHEBI:29105"/>
        <label>1</label>
    </ligand>
</feature>
<feature type="binding site" evidence="1">
    <location>
        <position position="138"/>
    </location>
    <ligand>
        <name>Zn(2+)</name>
        <dbReference type="ChEBI" id="CHEBI:29105"/>
        <label>1</label>
    </ligand>
</feature>
<feature type="binding site" evidence="1">
    <location>
        <position position="138"/>
    </location>
    <ligand>
        <name>Zn(2+)</name>
        <dbReference type="ChEBI" id="CHEBI:29105"/>
        <label>2</label>
    </ligand>
</feature>
<feature type="binding site" evidence="1">
    <location>
        <position position="176"/>
    </location>
    <ligand>
        <name>Zn(2+)</name>
        <dbReference type="ChEBI" id="CHEBI:29105"/>
        <label>2</label>
    </ligand>
</feature>
<gene>
    <name evidence="1" type="primary">gloB</name>
    <name type="ordered locus">BCAN_A1980</name>
</gene>
<dbReference type="EC" id="3.1.2.6" evidence="1"/>
<dbReference type="EMBL" id="CP000872">
    <property type="protein sequence ID" value="ABX62970.1"/>
    <property type="molecule type" value="Genomic_DNA"/>
</dbReference>
<dbReference type="RefSeq" id="WP_002965004.1">
    <property type="nucleotide sequence ID" value="NC_010103.1"/>
</dbReference>
<dbReference type="SMR" id="A9M8S2"/>
<dbReference type="GeneID" id="97534780"/>
<dbReference type="KEGG" id="bcs:BCAN_A1980"/>
<dbReference type="HOGENOM" id="CLU_030571_4_1_5"/>
<dbReference type="PhylomeDB" id="A9M8S2"/>
<dbReference type="UniPathway" id="UPA00619">
    <property type="reaction ID" value="UER00676"/>
</dbReference>
<dbReference type="Proteomes" id="UP000001385">
    <property type="component" value="Chromosome I"/>
</dbReference>
<dbReference type="GO" id="GO:0004416">
    <property type="term" value="F:hydroxyacylglutathione hydrolase activity"/>
    <property type="evidence" value="ECO:0007669"/>
    <property type="project" value="UniProtKB-UniRule"/>
</dbReference>
<dbReference type="GO" id="GO:0046872">
    <property type="term" value="F:metal ion binding"/>
    <property type="evidence" value="ECO:0007669"/>
    <property type="project" value="UniProtKB-KW"/>
</dbReference>
<dbReference type="GO" id="GO:0019243">
    <property type="term" value="P:methylglyoxal catabolic process to D-lactate via S-lactoyl-glutathione"/>
    <property type="evidence" value="ECO:0007669"/>
    <property type="project" value="InterPro"/>
</dbReference>
<dbReference type="CDD" id="cd07723">
    <property type="entry name" value="hydroxyacylglutathione_hydrolase_MBL-fold"/>
    <property type="match status" value="1"/>
</dbReference>
<dbReference type="Gene3D" id="3.60.15.10">
    <property type="entry name" value="Ribonuclease Z/Hydroxyacylglutathione hydrolase-like"/>
    <property type="match status" value="1"/>
</dbReference>
<dbReference type="HAMAP" id="MF_01374">
    <property type="entry name" value="Glyoxalase_2"/>
    <property type="match status" value="1"/>
</dbReference>
<dbReference type="InterPro" id="IPR035680">
    <property type="entry name" value="Clx_II_MBL"/>
</dbReference>
<dbReference type="InterPro" id="IPR050110">
    <property type="entry name" value="Glyoxalase_II_hydrolase"/>
</dbReference>
<dbReference type="InterPro" id="IPR032282">
    <property type="entry name" value="HAGH_C"/>
</dbReference>
<dbReference type="InterPro" id="IPR017782">
    <property type="entry name" value="Hydroxyacylglutathione_Hdrlase"/>
</dbReference>
<dbReference type="InterPro" id="IPR001279">
    <property type="entry name" value="Metallo-B-lactamas"/>
</dbReference>
<dbReference type="InterPro" id="IPR036866">
    <property type="entry name" value="RibonucZ/Hydroxyglut_hydro"/>
</dbReference>
<dbReference type="NCBIfam" id="TIGR03413">
    <property type="entry name" value="GSH_gloB"/>
    <property type="match status" value="1"/>
</dbReference>
<dbReference type="PANTHER" id="PTHR43705">
    <property type="entry name" value="HYDROXYACYLGLUTATHIONE HYDROLASE"/>
    <property type="match status" value="1"/>
</dbReference>
<dbReference type="PANTHER" id="PTHR43705:SF1">
    <property type="entry name" value="HYDROXYACYLGLUTATHIONE HYDROLASE GLOB"/>
    <property type="match status" value="1"/>
</dbReference>
<dbReference type="Pfam" id="PF16123">
    <property type="entry name" value="HAGH_C"/>
    <property type="match status" value="1"/>
</dbReference>
<dbReference type="Pfam" id="PF00753">
    <property type="entry name" value="Lactamase_B"/>
    <property type="match status" value="1"/>
</dbReference>
<dbReference type="PIRSF" id="PIRSF005457">
    <property type="entry name" value="Glx"/>
    <property type="match status" value="1"/>
</dbReference>
<dbReference type="SMART" id="SM00849">
    <property type="entry name" value="Lactamase_B"/>
    <property type="match status" value="1"/>
</dbReference>
<dbReference type="SUPFAM" id="SSF56281">
    <property type="entry name" value="Metallo-hydrolase/oxidoreductase"/>
    <property type="match status" value="1"/>
</dbReference>